<dbReference type="EC" id="3.4.11.1" evidence="1"/>
<dbReference type="EC" id="3.4.11.10" evidence="1"/>
<dbReference type="EMBL" id="CR925677">
    <property type="protein sequence ID" value="CAI28112.1"/>
    <property type="molecule type" value="Genomic_DNA"/>
</dbReference>
<dbReference type="RefSeq" id="WP_011255751.1">
    <property type="nucleotide sequence ID" value="NC_006831.1"/>
</dbReference>
<dbReference type="SMR" id="Q5FFZ5"/>
<dbReference type="KEGG" id="erg:ERGA_CDS_06600"/>
<dbReference type="HOGENOM" id="CLU_013734_6_0_5"/>
<dbReference type="OrthoDB" id="9809354at2"/>
<dbReference type="Proteomes" id="UP000000533">
    <property type="component" value="Chromosome"/>
</dbReference>
<dbReference type="GO" id="GO:0005737">
    <property type="term" value="C:cytoplasm"/>
    <property type="evidence" value="ECO:0007669"/>
    <property type="project" value="UniProtKB-SubCell"/>
</dbReference>
<dbReference type="GO" id="GO:0030145">
    <property type="term" value="F:manganese ion binding"/>
    <property type="evidence" value="ECO:0007669"/>
    <property type="project" value="UniProtKB-UniRule"/>
</dbReference>
<dbReference type="GO" id="GO:0070006">
    <property type="term" value="F:metalloaminopeptidase activity"/>
    <property type="evidence" value="ECO:0007669"/>
    <property type="project" value="InterPro"/>
</dbReference>
<dbReference type="GO" id="GO:0006508">
    <property type="term" value="P:proteolysis"/>
    <property type="evidence" value="ECO:0007669"/>
    <property type="project" value="UniProtKB-KW"/>
</dbReference>
<dbReference type="CDD" id="cd00433">
    <property type="entry name" value="Peptidase_M17"/>
    <property type="match status" value="1"/>
</dbReference>
<dbReference type="FunFam" id="3.40.630.10:FF:000004">
    <property type="entry name" value="Probable cytosol aminopeptidase"/>
    <property type="match status" value="1"/>
</dbReference>
<dbReference type="Gene3D" id="3.40.220.10">
    <property type="entry name" value="Leucine Aminopeptidase, subunit E, domain 1"/>
    <property type="match status" value="1"/>
</dbReference>
<dbReference type="Gene3D" id="3.40.630.10">
    <property type="entry name" value="Zn peptidases"/>
    <property type="match status" value="1"/>
</dbReference>
<dbReference type="HAMAP" id="MF_00181">
    <property type="entry name" value="Cytosol_peptidase_M17"/>
    <property type="match status" value="1"/>
</dbReference>
<dbReference type="InterPro" id="IPR011356">
    <property type="entry name" value="Leucine_aapep/pepB"/>
</dbReference>
<dbReference type="InterPro" id="IPR043472">
    <property type="entry name" value="Macro_dom-like"/>
</dbReference>
<dbReference type="InterPro" id="IPR000819">
    <property type="entry name" value="Peptidase_M17_C"/>
</dbReference>
<dbReference type="InterPro" id="IPR023042">
    <property type="entry name" value="Peptidase_M17_leu_NH2_pept"/>
</dbReference>
<dbReference type="InterPro" id="IPR008283">
    <property type="entry name" value="Peptidase_M17_N"/>
</dbReference>
<dbReference type="NCBIfam" id="NF002073">
    <property type="entry name" value="PRK00913.1-2"/>
    <property type="match status" value="1"/>
</dbReference>
<dbReference type="NCBIfam" id="NF002074">
    <property type="entry name" value="PRK00913.1-4"/>
    <property type="match status" value="1"/>
</dbReference>
<dbReference type="NCBIfam" id="NF002075">
    <property type="entry name" value="PRK00913.2-2"/>
    <property type="match status" value="1"/>
</dbReference>
<dbReference type="NCBIfam" id="NF002077">
    <property type="entry name" value="PRK00913.2-4"/>
    <property type="match status" value="1"/>
</dbReference>
<dbReference type="PANTHER" id="PTHR11963:SF23">
    <property type="entry name" value="CYTOSOL AMINOPEPTIDASE"/>
    <property type="match status" value="1"/>
</dbReference>
<dbReference type="PANTHER" id="PTHR11963">
    <property type="entry name" value="LEUCINE AMINOPEPTIDASE-RELATED"/>
    <property type="match status" value="1"/>
</dbReference>
<dbReference type="Pfam" id="PF00883">
    <property type="entry name" value="Peptidase_M17"/>
    <property type="match status" value="1"/>
</dbReference>
<dbReference type="Pfam" id="PF02789">
    <property type="entry name" value="Peptidase_M17_N"/>
    <property type="match status" value="1"/>
</dbReference>
<dbReference type="PRINTS" id="PR00481">
    <property type="entry name" value="LAMNOPPTDASE"/>
</dbReference>
<dbReference type="SUPFAM" id="SSF52949">
    <property type="entry name" value="Macro domain-like"/>
    <property type="match status" value="1"/>
</dbReference>
<dbReference type="SUPFAM" id="SSF53187">
    <property type="entry name" value="Zn-dependent exopeptidases"/>
    <property type="match status" value="1"/>
</dbReference>
<dbReference type="PROSITE" id="PS00631">
    <property type="entry name" value="CYTOSOL_AP"/>
    <property type="match status" value="1"/>
</dbReference>
<gene>
    <name evidence="1" type="primary">pepA</name>
    <name type="ordered locus">ERGA_CDS_06600</name>
</gene>
<name>AMPA_EHRRG</name>
<reference key="1">
    <citation type="journal article" date="2006" name="J. Bacteriol.">
        <title>Comparative genomic analysis of three strains of Ehrlichia ruminantium reveals an active process of genome size plasticity.</title>
        <authorList>
            <person name="Frutos R."/>
            <person name="Viari A."/>
            <person name="Ferraz C."/>
            <person name="Morgat A."/>
            <person name="Eychenie S."/>
            <person name="Kandassamy Y."/>
            <person name="Chantal I."/>
            <person name="Bensaid A."/>
            <person name="Coissac E."/>
            <person name="Vachiery N."/>
            <person name="Demaille J."/>
            <person name="Martinez D."/>
        </authorList>
    </citation>
    <scope>NUCLEOTIDE SEQUENCE [LARGE SCALE GENOMIC DNA]</scope>
    <source>
        <strain>Gardel</strain>
    </source>
</reference>
<comment type="function">
    <text evidence="1">Presumably involved in the processing and regular turnover of intracellular proteins. Catalyzes the removal of unsubstituted N-terminal amino acids from various peptides.</text>
</comment>
<comment type="catalytic activity">
    <reaction evidence="1">
        <text>Release of an N-terminal amino acid, Xaa-|-Yaa-, in which Xaa is preferably Leu, but may be other amino acids including Pro although not Arg or Lys, and Yaa may be Pro. Amino acid amides and methyl esters are also readily hydrolyzed, but rates on arylamides are exceedingly low.</text>
        <dbReference type="EC" id="3.4.11.1"/>
    </reaction>
</comment>
<comment type="catalytic activity">
    <reaction evidence="1">
        <text>Release of an N-terminal amino acid, preferentially leucine, but not glutamic or aspartic acids.</text>
        <dbReference type="EC" id="3.4.11.10"/>
    </reaction>
</comment>
<comment type="cofactor">
    <cofactor evidence="1">
        <name>Mn(2+)</name>
        <dbReference type="ChEBI" id="CHEBI:29035"/>
    </cofactor>
    <text evidence="1">Binds 2 manganese ions per subunit.</text>
</comment>
<comment type="subcellular location">
    <subcellularLocation>
        <location evidence="1">Cytoplasm</location>
    </subcellularLocation>
</comment>
<comment type="similarity">
    <text evidence="1">Belongs to the peptidase M17 family.</text>
</comment>
<keyword id="KW-0031">Aminopeptidase</keyword>
<keyword id="KW-0963">Cytoplasm</keyword>
<keyword id="KW-0378">Hydrolase</keyword>
<keyword id="KW-0464">Manganese</keyword>
<keyword id="KW-0479">Metal-binding</keyword>
<keyword id="KW-0645">Protease</keyword>
<accession>Q5FFZ5</accession>
<feature type="chain" id="PRO_1000019917" description="Probable cytosol aminopeptidase">
    <location>
        <begin position="1"/>
        <end position="500"/>
    </location>
</feature>
<feature type="active site" evidence="1">
    <location>
        <position position="274"/>
    </location>
</feature>
<feature type="active site" evidence="1">
    <location>
        <position position="348"/>
    </location>
</feature>
<feature type="binding site" evidence="1">
    <location>
        <position position="262"/>
    </location>
    <ligand>
        <name>Mn(2+)</name>
        <dbReference type="ChEBI" id="CHEBI:29035"/>
        <label>2</label>
    </ligand>
</feature>
<feature type="binding site" evidence="1">
    <location>
        <position position="267"/>
    </location>
    <ligand>
        <name>Mn(2+)</name>
        <dbReference type="ChEBI" id="CHEBI:29035"/>
        <label>1</label>
    </ligand>
</feature>
<feature type="binding site" evidence="1">
    <location>
        <position position="267"/>
    </location>
    <ligand>
        <name>Mn(2+)</name>
        <dbReference type="ChEBI" id="CHEBI:29035"/>
        <label>2</label>
    </ligand>
</feature>
<feature type="binding site" evidence="1">
    <location>
        <position position="285"/>
    </location>
    <ligand>
        <name>Mn(2+)</name>
        <dbReference type="ChEBI" id="CHEBI:29035"/>
        <label>2</label>
    </ligand>
</feature>
<feature type="binding site" evidence="1">
    <location>
        <position position="344"/>
    </location>
    <ligand>
        <name>Mn(2+)</name>
        <dbReference type="ChEBI" id="CHEBI:29035"/>
        <label>1</label>
    </ligand>
</feature>
<feature type="binding site" evidence="1">
    <location>
        <position position="346"/>
    </location>
    <ligand>
        <name>Mn(2+)</name>
        <dbReference type="ChEBI" id="CHEBI:29035"/>
        <label>1</label>
    </ligand>
</feature>
<feature type="binding site" evidence="1">
    <location>
        <position position="346"/>
    </location>
    <ligand>
        <name>Mn(2+)</name>
        <dbReference type="ChEBI" id="CHEBI:29035"/>
        <label>2</label>
    </ligand>
</feature>
<sequence>MINVSFLGLMSGISVLLKTTVIVVGIFEGSNHLEDNGALEGYNDKIMEIVNGYQSFDGKFAEVLPIIGLEKDFPVVVVIGLGKSEDFDENKALKVGGVIYSELNRMKVPDASIVINTDSNVSANIGYGALLRSFKFDKYFVEKKDKNSVYLNKLVLFSKNDPQEVTALFNDLKAEGESIFLARSFVSEPPNILYPETYAQMIYEELSKVGVTVEVFDEDYMKANQMMALLGVGQGSAKKSRLVVMKWNGGDESESPIAFVGKGVTFDTGGISLKPSKGMWDMKYDMAGSASVVGIMRTLAARKAKVNAVGVVGLVENSVDGNAQRPSDVVISMSGQTIEVLNTDAEGRLVLADALWYTQEMFTPKLMVDLATLTGAVVVALGNNQYAGLFSNDDAIANQLIVAGNESGEKLWRLPLDEAYDKLIDSSIADMQNISTKGYGADSITAAQFLQRFVNGVPWVHLDIAGMAWDYEGTEICPKGATGFGVRLLNRFVSKYYESH</sequence>
<evidence type="ECO:0000255" key="1">
    <source>
        <dbReference type="HAMAP-Rule" id="MF_00181"/>
    </source>
</evidence>
<proteinExistence type="inferred from homology"/>
<organism>
    <name type="scientific">Ehrlichia ruminantium (strain Gardel)</name>
    <dbReference type="NCBI Taxonomy" id="302409"/>
    <lineage>
        <taxon>Bacteria</taxon>
        <taxon>Pseudomonadati</taxon>
        <taxon>Pseudomonadota</taxon>
        <taxon>Alphaproteobacteria</taxon>
        <taxon>Rickettsiales</taxon>
        <taxon>Anaplasmataceae</taxon>
        <taxon>Ehrlichia</taxon>
    </lineage>
</organism>
<protein>
    <recommendedName>
        <fullName evidence="1">Probable cytosol aminopeptidase</fullName>
        <ecNumber evidence="1">3.4.11.1</ecNumber>
    </recommendedName>
    <alternativeName>
        <fullName evidence="1">Leucine aminopeptidase</fullName>
        <shortName evidence="1">LAP</shortName>
        <ecNumber evidence="1">3.4.11.10</ecNumber>
    </alternativeName>
    <alternativeName>
        <fullName evidence="1">Leucyl aminopeptidase</fullName>
    </alternativeName>
</protein>